<keyword id="KW-0963">Cytoplasm</keyword>
<keyword id="KW-0238">DNA-binding</keyword>
<keyword id="KW-1185">Reference proteome</keyword>
<protein>
    <recommendedName>
        <fullName evidence="1">Nucleoid-associated protein LA_4332</fullName>
    </recommendedName>
</protein>
<evidence type="ECO:0000255" key="1">
    <source>
        <dbReference type="HAMAP-Rule" id="MF_00274"/>
    </source>
</evidence>
<reference key="1">
    <citation type="journal article" date="2003" name="Nature">
        <title>Unique physiological and pathogenic features of Leptospira interrogans revealed by whole-genome sequencing.</title>
        <authorList>
            <person name="Ren S.-X."/>
            <person name="Fu G."/>
            <person name="Jiang X.-G."/>
            <person name="Zeng R."/>
            <person name="Miao Y.-G."/>
            <person name="Xu H."/>
            <person name="Zhang Y.-X."/>
            <person name="Xiong H."/>
            <person name="Lu G."/>
            <person name="Lu L.-F."/>
            <person name="Jiang H.-Q."/>
            <person name="Jia J."/>
            <person name="Tu Y.-F."/>
            <person name="Jiang J.-X."/>
            <person name="Gu W.-Y."/>
            <person name="Zhang Y.-Q."/>
            <person name="Cai Z."/>
            <person name="Sheng H.-H."/>
            <person name="Yin H.-F."/>
            <person name="Zhang Y."/>
            <person name="Zhu G.-F."/>
            <person name="Wan M."/>
            <person name="Huang H.-L."/>
            <person name="Qian Z."/>
            <person name="Wang S.-Y."/>
            <person name="Ma W."/>
            <person name="Yao Z.-J."/>
            <person name="Shen Y."/>
            <person name="Qiang B.-Q."/>
            <person name="Xia Q.-C."/>
            <person name="Guo X.-K."/>
            <person name="Danchin A."/>
            <person name="Saint Girons I."/>
            <person name="Somerville R.L."/>
            <person name="Wen Y.-M."/>
            <person name="Shi M.-H."/>
            <person name="Chen Z."/>
            <person name="Xu J.-G."/>
            <person name="Zhao G.-P."/>
        </authorList>
    </citation>
    <scope>NUCLEOTIDE SEQUENCE [LARGE SCALE GENOMIC DNA]</scope>
    <source>
        <strain>56601</strain>
    </source>
</reference>
<proteinExistence type="inferred from homology"/>
<organism>
    <name type="scientific">Leptospira interrogans serogroup Icterohaemorrhagiae serovar Lai (strain 56601)</name>
    <dbReference type="NCBI Taxonomy" id="189518"/>
    <lineage>
        <taxon>Bacteria</taxon>
        <taxon>Pseudomonadati</taxon>
        <taxon>Spirochaetota</taxon>
        <taxon>Spirochaetia</taxon>
        <taxon>Leptospirales</taxon>
        <taxon>Leptospiraceae</taxon>
        <taxon>Leptospira</taxon>
    </lineage>
</organism>
<comment type="function">
    <text evidence="1">Binds to DNA and alters its conformation. May be involved in regulation of gene expression, nucleoid organization and DNA protection.</text>
</comment>
<comment type="subunit">
    <text evidence="1">Homodimer.</text>
</comment>
<comment type="subcellular location">
    <subcellularLocation>
        <location evidence="1">Cytoplasm</location>
        <location evidence="1">Nucleoid</location>
    </subcellularLocation>
</comment>
<comment type="similarity">
    <text evidence="1">Belongs to the YbaB/EbfC family.</text>
</comment>
<name>Y4332_LEPIN</name>
<feature type="chain" id="PRO_0000170404" description="Nucleoid-associated protein LA_4332">
    <location>
        <begin position="1"/>
        <end position="115"/>
    </location>
</feature>
<gene>
    <name type="ordered locus">LA_4332</name>
</gene>
<dbReference type="EMBL" id="AE010300">
    <property type="protein sequence ID" value="AAN51530.1"/>
    <property type="molecule type" value="Genomic_DNA"/>
</dbReference>
<dbReference type="RefSeq" id="NP_714512.1">
    <property type="nucleotide sequence ID" value="NC_004342.2"/>
</dbReference>
<dbReference type="RefSeq" id="WP_000459763.1">
    <property type="nucleotide sequence ID" value="NC_004342.2"/>
</dbReference>
<dbReference type="SMR" id="Q8EY85"/>
<dbReference type="FunCoup" id="Q8EY85">
    <property type="interactions" value="349"/>
</dbReference>
<dbReference type="STRING" id="189518.LA_4332"/>
<dbReference type="PaxDb" id="189518-LA_4332"/>
<dbReference type="EnsemblBacteria" id="AAN51530">
    <property type="protein sequence ID" value="AAN51530"/>
    <property type="gene ID" value="LA_4332"/>
</dbReference>
<dbReference type="KEGG" id="lil:LA_4332"/>
<dbReference type="PATRIC" id="fig|189518.3.peg.4302"/>
<dbReference type="HOGENOM" id="CLU_140930_0_1_12"/>
<dbReference type="InParanoid" id="Q8EY85"/>
<dbReference type="OrthoDB" id="337929at2"/>
<dbReference type="Proteomes" id="UP000001408">
    <property type="component" value="Chromosome I"/>
</dbReference>
<dbReference type="GO" id="GO:0043590">
    <property type="term" value="C:bacterial nucleoid"/>
    <property type="evidence" value="ECO:0007669"/>
    <property type="project" value="UniProtKB-UniRule"/>
</dbReference>
<dbReference type="GO" id="GO:0005829">
    <property type="term" value="C:cytosol"/>
    <property type="evidence" value="ECO:0000318"/>
    <property type="project" value="GO_Central"/>
</dbReference>
<dbReference type="GO" id="GO:0003677">
    <property type="term" value="F:DNA binding"/>
    <property type="evidence" value="ECO:0000318"/>
    <property type="project" value="GO_Central"/>
</dbReference>
<dbReference type="FunFam" id="3.30.1310.10:FF:000006">
    <property type="entry name" value="Nucleoid-associated protein LEP1GSC116_0101"/>
    <property type="match status" value="1"/>
</dbReference>
<dbReference type="Gene3D" id="3.30.1310.10">
    <property type="entry name" value="Nucleoid-associated protein YbaB-like domain"/>
    <property type="match status" value="1"/>
</dbReference>
<dbReference type="HAMAP" id="MF_00274">
    <property type="entry name" value="DNA_YbaB_EbfC"/>
    <property type="match status" value="1"/>
</dbReference>
<dbReference type="InterPro" id="IPR036894">
    <property type="entry name" value="YbaB-like_sf"/>
</dbReference>
<dbReference type="InterPro" id="IPR004401">
    <property type="entry name" value="YbaB/EbfC"/>
</dbReference>
<dbReference type="NCBIfam" id="TIGR00103">
    <property type="entry name" value="DNA_YbaB_EbfC"/>
    <property type="match status" value="1"/>
</dbReference>
<dbReference type="PANTHER" id="PTHR33449">
    <property type="entry name" value="NUCLEOID-ASSOCIATED PROTEIN YBAB"/>
    <property type="match status" value="1"/>
</dbReference>
<dbReference type="PANTHER" id="PTHR33449:SF1">
    <property type="entry name" value="NUCLEOID-ASSOCIATED PROTEIN YBAB"/>
    <property type="match status" value="1"/>
</dbReference>
<dbReference type="Pfam" id="PF02575">
    <property type="entry name" value="YbaB_DNA_bd"/>
    <property type="match status" value="1"/>
</dbReference>
<dbReference type="PIRSF" id="PIRSF004555">
    <property type="entry name" value="UCP004555"/>
    <property type="match status" value="1"/>
</dbReference>
<dbReference type="SUPFAM" id="SSF82607">
    <property type="entry name" value="YbaB-like"/>
    <property type="match status" value="1"/>
</dbReference>
<accession>Q8EY85</accession>
<sequence length="115" mass="12517">MFDKIKNFSEILSNMGSFREKMEEVKKRIASIRVVGDAGAGMVTVTASGEGQITNVFINKQLFDADDNKMLEDLVMAATNDALKKAKEATAYEFQSASGGLDFSEISKMFGGKFG</sequence>